<comment type="function">
    <text evidence="1">Catalyzes the hydrolytic cleavage of the carbon-nitrogen bond in imidazolone-5-propanoate to yield N-formimidoyl-L-glutamate. It is the third step in the universal histidine degradation pathway.</text>
</comment>
<comment type="catalytic activity">
    <reaction evidence="1">
        <text>4-imidazolone-5-propanoate + H2O = N-formimidoyl-L-glutamate</text>
        <dbReference type="Rhea" id="RHEA:23660"/>
        <dbReference type="ChEBI" id="CHEBI:15377"/>
        <dbReference type="ChEBI" id="CHEBI:58928"/>
        <dbReference type="ChEBI" id="CHEBI:77893"/>
        <dbReference type="EC" id="3.5.2.7"/>
    </reaction>
</comment>
<comment type="cofactor">
    <cofactor evidence="1">
        <name>Zn(2+)</name>
        <dbReference type="ChEBI" id="CHEBI:29105"/>
    </cofactor>
    <cofactor evidence="1">
        <name>Fe(3+)</name>
        <dbReference type="ChEBI" id="CHEBI:29034"/>
    </cofactor>
    <text evidence="1">Binds 1 zinc or iron ion per subunit.</text>
</comment>
<comment type="pathway">
    <text evidence="1">Amino-acid degradation; L-histidine degradation into L-glutamate; N-formimidoyl-L-glutamate from L-histidine: step 3/3.</text>
</comment>
<comment type="subcellular location">
    <subcellularLocation>
        <location evidence="1">Cytoplasm</location>
    </subcellularLocation>
</comment>
<comment type="similarity">
    <text evidence="1">Belongs to the metallo-dependent hydrolases superfamily. HutI family.</text>
</comment>
<sequence length="408" mass="42689">MADIRWDALWTHVHLATLAADADGYGEIRDGAIAVRDGRIAWLGARADLPAGARAEREHDGGGAWLTPGLIDCHTHLVHAGNRSNEFEARLNGVPYEHIARAGGGILSTVRATRAASEDALAQASLPRLNALRAEGVTTVEIKSGYGLDLETERRMLRVARRFGQTLRVRVRTTFLGAHAVPPEFAGRADDYIGHLCADVLPALAAEGLVDAVDAFCETIGFSPAQTARMFDAAQALGLPVKLHAEQLSDQGGAALVARYGGLSADHLECLTDAGVAAMAEAGTVAVLLPGAFYCLRETRLPPLQALRQAGVPMAVSTDCNPGTSPLSSLLLAMNMACTLFRLTPLEALTGATRHAAAALGLAGTCGVLAPGCVADFALWRIDRPADLAYAMGLNPCAGVVKDGAPAR</sequence>
<keyword id="KW-0963">Cytoplasm</keyword>
<keyword id="KW-0369">Histidine metabolism</keyword>
<keyword id="KW-0378">Hydrolase</keyword>
<keyword id="KW-0408">Iron</keyword>
<keyword id="KW-0479">Metal-binding</keyword>
<keyword id="KW-1185">Reference proteome</keyword>
<keyword id="KW-0862">Zinc</keyword>
<evidence type="ECO:0000255" key="1">
    <source>
        <dbReference type="HAMAP-Rule" id="MF_00372"/>
    </source>
</evidence>
<organism>
    <name type="scientific">Ralstonia nicotianae (strain ATCC BAA-1114 / GMI1000)</name>
    <name type="common">Ralstonia solanacearum</name>
    <dbReference type="NCBI Taxonomy" id="267608"/>
    <lineage>
        <taxon>Bacteria</taxon>
        <taxon>Pseudomonadati</taxon>
        <taxon>Pseudomonadota</taxon>
        <taxon>Betaproteobacteria</taxon>
        <taxon>Burkholderiales</taxon>
        <taxon>Burkholderiaceae</taxon>
        <taxon>Ralstonia</taxon>
        <taxon>Ralstonia solanacearum species complex</taxon>
    </lineage>
</organism>
<gene>
    <name evidence="1" type="primary">hutI</name>
    <name type="ordered locus">RSc2644</name>
    <name type="ORF">RS04572</name>
</gene>
<dbReference type="EC" id="3.5.2.7" evidence="1"/>
<dbReference type="EMBL" id="AL646052">
    <property type="protein sequence ID" value="CAD16351.1"/>
    <property type="molecule type" value="Genomic_DNA"/>
</dbReference>
<dbReference type="RefSeq" id="WP_011002554.1">
    <property type="nucleotide sequence ID" value="NC_003295.1"/>
</dbReference>
<dbReference type="SMR" id="Q8XW31"/>
<dbReference type="STRING" id="267608.RSc2644"/>
<dbReference type="EnsemblBacteria" id="CAD16351">
    <property type="protein sequence ID" value="CAD16351"/>
    <property type="gene ID" value="RSc2644"/>
</dbReference>
<dbReference type="KEGG" id="rso:RSc2644"/>
<dbReference type="PATRIC" id="fig|267608.8.peg.2685"/>
<dbReference type="eggNOG" id="COG1228">
    <property type="taxonomic scope" value="Bacteria"/>
</dbReference>
<dbReference type="HOGENOM" id="CLU_041647_0_0_4"/>
<dbReference type="UniPathway" id="UPA00379">
    <property type="reaction ID" value="UER00551"/>
</dbReference>
<dbReference type="Proteomes" id="UP000001436">
    <property type="component" value="Chromosome"/>
</dbReference>
<dbReference type="GO" id="GO:0005737">
    <property type="term" value="C:cytoplasm"/>
    <property type="evidence" value="ECO:0007669"/>
    <property type="project" value="UniProtKB-SubCell"/>
</dbReference>
<dbReference type="GO" id="GO:0050480">
    <property type="term" value="F:imidazolonepropionase activity"/>
    <property type="evidence" value="ECO:0007669"/>
    <property type="project" value="UniProtKB-UniRule"/>
</dbReference>
<dbReference type="GO" id="GO:0005506">
    <property type="term" value="F:iron ion binding"/>
    <property type="evidence" value="ECO:0007669"/>
    <property type="project" value="UniProtKB-UniRule"/>
</dbReference>
<dbReference type="GO" id="GO:0008270">
    <property type="term" value="F:zinc ion binding"/>
    <property type="evidence" value="ECO:0007669"/>
    <property type="project" value="UniProtKB-UniRule"/>
</dbReference>
<dbReference type="GO" id="GO:0019556">
    <property type="term" value="P:L-histidine catabolic process to glutamate and formamide"/>
    <property type="evidence" value="ECO:0007669"/>
    <property type="project" value="UniProtKB-UniPathway"/>
</dbReference>
<dbReference type="GO" id="GO:0019557">
    <property type="term" value="P:L-histidine catabolic process to glutamate and formate"/>
    <property type="evidence" value="ECO:0007669"/>
    <property type="project" value="UniProtKB-UniPathway"/>
</dbReference>
<dbReference type="CDD" id="cd01296">
    <property type="entry name" value="Imidazolone-5PH"/>
    <property type="match status" value="1"/>
</dbReference>
<dbReference type="FunFam" id="3.20.20.140:FF:000007">
    <property type="entry name" value="Imidazolonepropionase"/>
    <property type="match status" value="1"/>
</dbReference>
<dbReference type="Gene3D" id="3.20.20.140">
    <property type="entry name" value="Metal-dependent hydrolases"/>
    <property type="match status" value="1"/>
</dbReference>
<dbReference type="Gene3D" id="2.30.40.10">
    <property type="entry name" value="Urease, subunit C, domain 1"/>
    <property type="match status" value="1"/>
</dbReference>
<dbReference type="HAMAP" id="MF_00372">
    <property type="entry name" value="HutI"/>
    <property type="match status" value="1"/>
</dbReference>
<dbReference type="InterPro" id="IPR006680">
    <property type="entry name" value="Amidohydro-rel"/>
</dbReference>
<dbReference type="InterPro" id="IPR005920">
    <property type="entry name" value="HutI"/>
</dbReference>
<dbReference type="InterPro" id="IPR011059">
    <property type="entry name" value="Metal-dep_hydrolase_composite"/>
</dbReference>
<dbReference type="InterPro" id="IPR032466">
    <property type="entry name" value="Metal_Hydrolase"/>
</dbReference>
<dbReference type="NCBIfam" id="TIGR01224">
    <property type="entry name" value="hutI"/>
    <property type="match status" value="1"/>
</dbReference>
<dbReference type="PANTHER" id="PTHR42752">
    <property type="entry name" value="IMIDAZOLONEPROPIONASE"/>
    <property type="match status" value="1"/>
</dbReference>
<dbReference type="PANTHER" id="PTHR42752:SF1">
    <property type="entry name" value="IMIDAZOLONEPROPIONASE-RELATED"/>
    <property type="match status" value="1"/>
</dbReference>
<dbReference type="Pfam" id="PF01979">
    <property type="entry name" value="Amidohydro_1"/>
    <property type="match status" value="1"/>
</dbReference>
<dbReference type="SUPFAM" id="SSF51338">
    <property type="entry name" value="Composite domain of metallo-dependent hydrolases"/>
    <property type="match status" value="1"/>
</dbReference>
<dbReference type="SUPFAM" id="SSF51556">
    <property type="entry name" value="Metallo-dependent hydrolases"/>
    <property type="match status" value="1"/>
</dbReference>
<reference key="1">
    <citation type="journal article" date="2002" name="Nature">
        <title>Genome sequence of the plant pathogen Ralstonia solanacearum.</title>
        <authorList>
            <person name="Salanoubat M."/>
            <person name="Genin S."/>
            <person name="Artiguenave F."/>
            <person name="Gouzy J."/>
            <person name="Mangenot S."/>
            <person name="Arlat M."/>
            <person name="Billault A."/>
            <person name="Brottier P."/>
            <person name="Camus J.-C."/>
            <person name="Cattolico L."/>
            <person name="Chandler M."/>
            <person name="Choisne N."/>
            <person name="Claudel-Renard C."/>
            <person name="Cunnac S."/>
            <person name="Demange N."/>
            <person name="Gaspin C."/>
            <person name="Lavie M."/>
            <person name="Moisan A."/>
            <person name="Robert C."/>
            <person name="Saurin W."/>
            <person name="Schiex T."/>
            <person name="Siguier P."/>
            <person name="Thebault P."/>
            <person name="Whalen M."/>
            <person name="Wincker P."/>
            <person name="Levy M."/>
            <person name="Weissenbach J."/>
            <person name="Boucher C.A."/>
        </authorList>
    </citation>
    <scope>NUCLEOTIDE SEQUENCE [LARGE SCALE GENOMIC DNA]</scope>
    <source>
        <strain>ATCC BAA-1114 / GMI1000</strain>
    </source>
</reference>
<protein>
    <recommendedName>
        <fullName evidence="1">Imidazolonepropionase</fullName>
        <ecNumber evidence="1">3.5.2.7</ecNumber>
    </recommendedName>
    <alternativeName>
        <fullName evidence="1">Imidazolone-5-propionate hydrolase</fullName>
    </alternativeName>
</protein>
<proteinExistence type="inferred from homology"/>
<accession>Q8XW31</accession>
<name>HUTI_RALN1</name>
<feature type="chain" id="PRO_0000160953" description="Imidazolonepropionase">
    <location>
        <begin position="1"/>
        <end position="408"/>
    </location>
</feature>
<feature type="binding site" evidence="1">
    <location>
        <position position="74"/>
    </location>
    <ligand>
        <name>Fe(3+)</name>
        <dbReference type="ChEBI" id="CHEBI:29034"/>
    </ligand>
</feature>
<feature type="binding site" evidence="1">
    <location>
        <position position="74"/>
    </location>
    <ligand>
        <name>Zn(2+)</name>
        <dbReference type="ChEBI" id="CHEBI:29105"/>
    </ligand>
</feature>
<feature type="binding site" evidence="1">
    <location>
        <position position="76"/>
    </location>
    <ligand>
        <name>Fe(3+)</name>
        <dbReference type="ChEBI" id="CHEBI:29034"/>
    </ligand>
</feature>
<feature type="binding site" evidence="1">
    <location>
        <position position="76"/>
    </location>
    <ligand>
        <name>Zn(2+)</name>
        <dbReference type="ChEBI" id="CHEBI:29105"/>
    </ligand>
</feature>
<feature type="binding site" evidence="1">
    <location>
        <position position="83"/>
    </location>
    <ligand>
        <name>4-imidazolone-5-propanoate</name>
        <dbReference type="ChEBI" id="CHEBI:77893"/>
    </ligand>
</feature>
<feature type="binding site" evidence="1">
    <location>
        <position position="146"/>
    </location>
    <ligand>
        <name>4-imidazolone-5-propanoate</name>
        <dbReference type="ChEBI" id="CHEBI:77893"/>
    </ligand>
</feature>
<feature type="binding site" evidence="1">
    <location>
        <position position="146"/>
    </location>
    <ligand>
        <name>N-formimidoyl-L-glutamate</name>
        <dbReference type="ChEBI" id="CHEBI:58928"/>
    </ligand>
</feature>
<feature type="binding site" evidence="1">
    <location>
        <position position="179"/>
    </location>
    <ligand>
        <name>4-imidazolone-5-propanoate</name>
        <dbReference type="ChEBI" id="CHEBI:77893"/>
    </ligand>
</feature>
<feature type="binding site" evidence="1">
    <location>
        <position position="244"/>
    </location>
    <ligand>
        <name>Fe(3+)</name>
        <dbReference type="ChEBI" id="CHEBI:29034"/>
    </ligand>
</feature>
<feature type="binding site" evidence="1">
    <location>
        <position position="244"/>
    </location>
    <ligand>
        <name>Zn(2+)</name>
        <dbReference type="ChEBI" id="CHEBI:29105"/>
    </ligand>
</feature>
<feature type="binding site" evidence="1">
    <location>
        <position position="247"/>
    </location>
    <ligand>
        <name>4-imidazolone-5-propanoate</name>
        <dbReference type="ChEBI" id="CHEBI:77893"/>
    </ligand>
</feature>
<feature type="binding site" evidence="1">
    <location>
        <position position="319"/>
    </location>
    <ligand>
        <name>Fe(3+)</name>
        <dbReference type="ChEBI" id="CHEBI:29034"/>
    </ligand>
</feature>
<feature type="binding site" evidence="1">
    <location>
        <position position="319"/>
    </location>
    <ligand>
        <name>Zn(2+)</name>
        <dbReference type="ChEBI" id="CHEBI:29105"/>
    </ligand>
</feature>
<feature type="binding site" evidence="1">
    <location>
        <position position="321"/>
    </location>
    <ligand>
        <name>N-formimidoyl-L-glutamate</name>
        <dbReference type="ChEBI" id="CHEBI:58928"/>
    </ligand>
</feature>
<feature type="binding site" evidence="1">
    <location>
        <position position="323"/>
    </location>
    <ligand>
        <name>N-formimidoyl-L-glutamate</name>
        <dbReference type="ChEBI" id="CHEBI:58928"/>
    </ligand>
</feature>
<feature type="binding site" evidence="1">
    <location>
        <position position="324"/>
    </location>
    <ligand>
        <name>4-imidazolone-5-propanoate</name>
        <dbReference type="ChEBI" id="CHEBI:77893"/>
    </ligand>
</feature>